<accession>Q4FPG0</accession>
<reference key="1">
    <citation type="journal article" date="2005" name="Science">
        <title>Genome streamlining in a cosmopolitan oceanic bacterium.</title>
        <authorList>
            <person name="Giovannoni S.J."/>
            <person name="Tripp H.J."/>
            <person name="Givan S."/>
            <person name="Podar M."/>
            <person name="Vergin K.L."/>
            <person name="Baptista D."/>
            <person name="Bibbs L."/>
            <person name="Eads J."/>
            <person name="Richardson T.H."/>
            <person name="Noordewier M."/>
            <person name="Rappe M.S."/>
            <person name="Short J.M."/>
            <person name="Carrington J.C."/>
            <person name="Mathur E.J."/>
        </authorList>
    </citation>
    <scope>NUCLEOTIDE SEQUENCE [LARGE SCALE GENOMIC DNA]</scope>
    <source>
        <strain>HTCC1062</strain>
    </source>
</reference>
<organism>
    <name type="scientific">Pelagibacter ubique (strain HTCC1062)</name>
    <dbReference type="NCBI Taxonomy" id="335992"/>
    <lineage>
        <taxon>Bacteria</taxon>
        <taxon>Pseudomonadati</taxon>
        <taxon>Pseudomonadota</taxon>
        <taxon>Alphaproteobacteria</taxon>
        <taxon>Candidatus Pelagibacterales</taxon>
        <taxon>Candidatus Pelagibacteraceae</taxon>
        <taxon>Candidatus Pelagibacter</taxon>
    </lineage>
</organism>
<protein>
    <recommendedName>
        <fullName evidence="1">4-diphosphocytidyl-2-C-methyl-D-erythritol kinase</fullName>
        <shortName evidence="1">CMK</shortName>
        <ecNumber evidence="1">2.7.1.148</ecNumber>
    </recommendedName>
    <alternativeName>
        <fullName evidence="1">4-(cytidine-5'-diphospho)-2-C-methyl-D-erythritol kinase</fullName>
    </alternativeName>
</protein>
<proteinExistence type="inferred from homology"/>
<keyword id="KW-0067">ATP-binding</keyword>
<keyword id="KW-0414">Isoprene biosynthesis</keyword>
<keyword id="KW-0418">Kinase</keyword>
<keyword id="KW-0547">Nucleotide-binding</keyword>
<keyword id="KW-1185">Reference proteome</keyword>
<keyword id="KW-0808">Transferase</keyword>
<gene>
    <name evidence="1" type="primary">ispE</name>
    <name type="ordered locus">SAR11_0105</name>
</gene>
<comment type="function">
    <text evidence="1">Catalyzes the phosphorylation of the position 2 hydroxy group of 4-diphosphocytidyl-2C-methyl-D-erythritol.</text>
</comment>
<comment type="catalytic activity">
    <reaction evidence="1">
        <text>4-CDP-2-C-methyl-D-erythritol + ATP = 4-CDP-2-C-methyl-D-erythritol 2-phosphate + ADP + H(+)</text>
        <dbReference type="Rhea" id="RHEA:18437"/>
        <dbReference type="ChEBI" id="CHEBI:15378"/>
        <dbReference type="ChEBI" id="CHEBI:30616"/>
        <dbReference type="ChEBI" id="CHEBI:57823"/>
        <dbReference type="ChEBI" id="CHEBI:57919"/>
        <dbReference type="ChEBI" id="CHEBI:456216"/>
        <dbReference type="EC" id="2.7.1.148"/>
    </reaction>
</comment>
<comment type="pathway">
    <text evidence="1">Isoprenoid biosynthesis; isopentenyl diphosphate biosynthesis via DXP pathway; isopentenyl diphosphate from 1-deoxy-D-xylulose 5-phosphate: step 3/6.</text>
</comment>
<comment type="similarity">
    <text evidence="1">Belongs to the GHMP kinase family. IspE subfamily.</text>
</comment>
<feature type="chain" id="PRO_0000235111" description="4-diphosphocytidyl-2-C-methyl-D-erythritol kinase">
    <location>
        <begin position="1"/>
        <end position="281"/>
    </location>
</feature>
<feature type="active site" evidence="1">
    <location>
        <position position="11"/>
    </location>
</feature>
<feature type="active site" evidence="1">
    <location>
        <position position="138"/>
    </location>
</feature>
<evidence type="ECO:0000255" key="1">
    <source>
        <dbReference type="HAMAP-Rule" id="MF_00061"/>
    </source>
</evidence>
<dbReference type="EC" id="2.7.1.148" evidence="1"/>
<dbReference type="EMBL" id="CP000084">
    <property type="protein sequence ID" value="AAZ20929.1"/>
    <property type="molecule type" value="Genomic_DNA"/>
</dbReference>
<dbReference type="RefSeq" id="WP_011281473.1">
    <property type="nucleotide sequence ID" value="NC_007205.1"/>
</dbReference>
<dbReference type="SMR" id="Q4FPG0"/>
<dbReference type="STRING" id="335992.SAR11_0105"/>
<dbReference type="GeneID" id="66294608"/>
<dbReference type="KEGG" id="pub:SAR11_0105"/>
<dbReference type="eggNOG" id="COG1947">
    <property type="taxonomic scope" value="Bacteria"/>
</dbReference>
<dbReference type="HOGENOM" id="CLU_053057_2_0_5"/>
<dbReference type="OrthoDB" id="9809438at2"/>
<dbReference type="UniPathway" id="UPA00056">
    <property type="reaction ID" value="UER00094"/>
</dbReference>
<dbReference type="Proteomes" id="UP000002528">
    <property type="component" value="Chromosome"/>
</dbReference>
<dbReference type="GO" id="GO:0050515">
    <property type="term" value="F:4-(cytidine 5'-diphospho)-2-C-methyl-D-erythritol kinase activity"/>
    <property type="evidence" value="ECO:0007669"/>
    <property type="project" value="UniProtKB-UniRule"/>
</dbReference>
<dbReference type="GO" id="GO:0005524">
    <property type="term" value="F:ATP binding"/>
    <property type="evidence" value="ECO:0007669"/>
    <property type="project" value="UniProtKB-UniRule"/>
</dbReference>
<dbReference type="GO" id="GO:0019288">
    <property type="term" value="P:isopentenyl diphosphate biosynthetic process, methylerythritol 4-phosphate pathway"/>
    <property type="evidence" value="ECO:0007669"/>
    <property type="project" value="UniProtKB-UniRule"/>
</dbReference>
<dbReference type="GO" id="GO:0016114">
    <property type="term" value="P:terpenoid biosynthetic process"/>
    <property type="evidence" value="ECO:0007669"/>
    <property type="project" value="InterPro"/>
</dbReference>
<dbReference type="Gene3D" id="3.30.230.10">
    <property type="match status" value="1"/>
</dbReference>
<dbReference type="Gene3D" id="3.30.70.890">
    <property type="entry name" value="GHMP kinase, C-terminal domain"/>
    <property type="match status" value="1"/>
</dbReference>
<dbReference type="HAMAP" id="MF_00061">
    <property type="entry name" value="IspE"/>
    <property type="match status" value="1"/>
</dbReference>
<dbReference type="InterPro" id="IPR013750">
    <property type="entry name" value="GHMP_kinase_C_dom"/>
</dbReference>
<dbReference type="InterPro" id="IPR036554">
    <property type="entry name" value="GHMP_kinase_C_sf"/>
</dbReference>
<dbReference type="InterPro" id="IPR006204">
    <property type="entry name" value="GHMP_kinase_N_dom"/>
</dbReference>
<dbReference type="InterPro" id="IPR004424">
    <property type="entry name" value="IspE"/>
</dbReference>
<dbReference type="InterPro" id="IPR020568">
    <property type="entry name" value="Ribosomal_Su5_D2-typ_SF"/>
</dbReference>
<dbReference type="InterPro" id="IPR014721">
    <property type="entry name" value="Ribsml_uS5_D2-typ_fold_subgr"/>
</dbReference>
<dbReference type="PANTHER" id="PTHR43527">
    <property type="entry name" value="4-DIPHOSPHOCYTIDYL-2-C-METHYL-D-ERYTHRITOL KINASE, CHLOROPLASTIC"/>
    <property type="match status" value="1"/>
</dbReference>
<dbReference type="PANTHER" id="PTHR43527:SF2">
    <property type="entry name" value="4-DIPHOSPHOCYTIDYL-2-C-METHYL-D-ERYTHRITOL KINASE, CHLOROPLASTIC"/>
    <property type="match status" value="1"/>
</dbReference>
<dbReference type="Pfam" id="PF08544">
    <property type="entry name" value="GHMP_kinases_C"/>
    <property type="match status" value="1"/>
</dbReference>
<dbReference type="Pfam" id="PF00288">
    <property type="entry name" value="GHMP_kinases_N"/>
    <property type="match status" value="1"/>
</dbReference>
<dbReference type="PIRSF" id="PIRSF010376">
    <property type="entry name" value="IspE"/>
    <property type="match status" value="1"/>
</dbReference>
<dbReference type="SUPFAM" id="SSF55060">
    <property type="entry name" value="GHMP Kinase, C-terminal domain"/>
    <property type="match status" value="1"/>
</dbReference>
<dbReference type="SUPFAM" id="SSF54211">
    <property type="entry name" value="Ribosomal protein S5 domain 2-like"/>
    <property type="match status" value="1"/>
</dbReference>
<name>ISPE_PELUB</name>
<sequence>MNSFKIKSYAKINLALNVTGKKSKLHNIESLISFIDLHDSITITESNTKQHKINFIGRFSKNISKINTISKLLKILDNKKLLNNKKFEIKVIKHIPQKAGMGGGSMNAASLLNFFIEKKLIKIKKNDSKKISNEIGSDVILGIKPSLAILLSNGDIKKFKNKIKFHILVAKPNFGCSTKYIYSKVDSFSKPQFNPPKQKLFEAKYLKNLDNDLEKVALNKYPELKRIKSYLNGLPNTLFVRMSGSGSSIVAYFHSKKACKKACSQYKRKFNNHWCIESKTI</sequence>